<protein>
    <recommendedName>
        <fullName evidence="1">Heat-inducible transcription repressor HrcA</fullName>
    </recommendedName>
</protein>
<gene>
    <name evidence="1" type="primary">hrcA</name>
    <name type="ordered locus">Nmul_A2423</name>
</gene>
<sequence>MLNKRAQILLKTLVERYISEGQPVGSRSLSKFSGLDLSAATIRNVMADLEDMGLVASPHASAGRIPTHQGYRFFVDTLLVVKPLDVIEIHQLQDQLHPDNPSRLINSASQLLAELTRFAGVVVSPKRNSAIFRYIEFMSLSEKRVLLIIVTPEGDVQNRVLFTDRNYSQSELTEAANFINHNYAGCAIDEIRTRLQSELKQLRQDMTSLMTAAIDAGDAAIRENSEAVIVAGERKLLDVQDLSSNMASLKKLFDLFERKTALLQLLEFSRKAEGVQIFIGEECGVVTMDEFSVVTAPYRVDGKMVGTVAVIGPTRMAYERVIPVVDMTARLLSSALSLH</sequence>
<evidence type="ECO:0000255" key="1">
    <source>
        <dbReference type="HAMAP-Rule" id="MF_00081"/>
    </source>
</evidence>
<name>HRCA_NITMU</name>
<organism>
    <name type="scientific">Nitrosospira multiformis (strain ATCC 25196 / NCIMB 11849 / C 71)</name>
    <dbReference type="NCBI Taxonomy" id="323848"/>
    <lineage>
        <taxon>Bacteria</taxon>
        <taxon>Pseudomonadati</taxon>
        <taxon>Pseudomonadota</taxon>
        <taxon>Betaproteobacteria</taxon>
        <taxon>Nitrosomonadales</taxon>
        <taxon>Nitrosomonadaceae</taxon>
        <taxon>Nitrosospira</taxon>
    </lineage>
</organism>
<reference key="1">
    <citation type="submission" date="2005-08" db="EMBL/GenBank/DDBJ databases">
        <title>Complete sequence of chromosome 1 of Nitrosospira multiformis ATCC 25196.</title>
        <authorList>
            <person name="Copeland A."/>
            <person name="Lucas S."/>
            <person name="Lapidus A."/>
            <person name="Barry K."/>
            <person name="Detter J.C."/>
            <person name="Glavina T."/>
            <person name="Hammon N."/>
            <person name="Israni S."/>
            <person name="Pitluck S."/>
            <person name="Chain P."/>
            <person name="Malfatti S."/>
            <person name="Shin M."/>
            <person name="Vergez L."/>
            <person name="Schmutz J."/>
            <person name="Larimer F."/>
            <person name="Land M."/>
            <person name="Hauser L."/>
            <person name="Kyrpides N."/>
            <person name="Lykidis A."/>
            <person name="Richardson P."/>
        </authorList>
    </citation>
    <scope>NUCLEOTIDE SEQUENCE [LARGE SCALE GENOMIC DNA]</scope>
    <source>
        <strain>ATCC 25196 / NCIMB 11849 / C 71</strain>
    </source>
</reference>
<accession>Q2Y6A9</accession>
<comment type="function">
    <text evidence="1">Negative regulator of class I heat shock genes (grpE-dnaK-dnaJ and groELS operons). Prevents heat-shock induction of these operons.</text>
</comment>
<comment type="similarity">
    <text evidence="1">Belongs to the HrcA family.</text>
</comment>
<proteinExistence type="inferred from homology"/>
<dbReference type="EMBL" id="CP000103">
    <property type="protein sequence ID" value="ABB75712.1"/>
    <property type="molecule type" value="Genomic_DNA"/>
</dbReference>
<dbReference type="RefSeq" id="WP_011381713.1">
    <property type="nucleotide sequence ID" value="NC_007614.1"/>
</dbReference>
<dbReference type="SMR" id="Q2Y6A9"/>
<dbReference type="STRING" id="323848.Nmul_A2423"/>
<dbReference type="KEGG" id="nmu:Nmul_A2423"/>
<dbReference type="eggNOG" id="COG1420">
    <property type="taxonomic scope" value="Bacteria"/>
</dbReference>
<dbReference type="HOGENOM" id="CLU_050019_0_0_4"/>
<dbReference type="OrthoDB" id="9783139at2"/>
<dbReference type="Proteomes" id="UP000002718">
    <property type="component" value="Chromosome"/>
</dbReference>
<dbReference type="GO" id="GO:0003677">
    <property type="term" value="F:DNA binding"/>
    <property type="evidence" value="ECO:0007669"/>
    <property type="project" value="InterPro"/>
</dbReference>
<dbReference type="GO" id="GO:0045892">
    <property type="term" value="P:negative regulation of DNA-templated transcription"/>
    <property type="evidence" value="ECO:0007669"/>
    <property type="project" value="UniProtKB-UniRule"/>
</dbReference>
<dbReference type="Gene3D" id="3.30.450.40">
    <property type="match status" value="1"/>
</dbReference>
<dbReference type="Gene3D" id="3.30.390.60">
    <property type="entry name" value="Heat-inducible transcription repressor hrca homolog, domain 3"/>
    <property type="match status" value="1"/>
</dbReference>
<dbReference type="Gene3D" id="1.10.10.10">
    <property type="entry name" value="Winged helix-like DNA-binding domain superfamily/Winged helix DNA-binding domain"/>
    <property type="match status" value="1"/>
</dbReference>
<dbReference type="HAMAP" id="MF_00081">
    <property type="entry name" value="HrcA"/>
    <property type="match status" value="1"/>
</dbReference>
<dbReference type="InterPro" id="IPR029016">
    <property type="entry name" value="GAF-like_dom_sf"/>
</dbReference>
<dbReference type="InterPro" id="IPR002571">
    <property type="entry name" value="HrcA"/>
</dbReference>
<dbReference type="InterPro" id="IPR021153">
    <property type="entry name" value="HrcA_C"/>
</dbReference>
<dbReference type="InterPro" id="IPR036388">
    <property type="entry name" value="WH-like_DNA-bd_sf"/>
</dbReference>
<dbReference type="InterPro" id="IPR036390">
    <property type="entry name" value="WH_DNA-bd_sf"/>
</dbReference>
<dbReference type="InterPro" id="IPR005104">
    <property type="entry name" value="WHTH_HrcA_DNA-bd"/>
</dbReference>
<dbReference type="InterPro" id="IPR023120">
    <property type="entry name" value="WHTH_transcript_rep_HrcA_IDD"/>
</dbReference>
<dbReference type="NCBIfam" id="TIGR00331">
    <property type="entry name" value="hrcA"/>
    <property type="match status" value="1"/>
</dbReference>
<dbReference type="PANTHER" id="PTHR34824">
    <property type="entry name" value="HEAT-INDUCIBLE TRANSCRIPTION REPRESSOR HRCA"/>
    <property type="match status" value="1"/>
</dbReference>
<dbReference type="PANTHER" id="PTHR34824:SF1">
    <property type="entry name" value="HEAT-INDUCIBLE TRANSCRIPTION REPRESSOR HRCA"/>
    <property type="match status" value="1"/>
</dbReference>
<dbReference type="Pfam" id="PF01628">
    <property type="entry name" value="HrcA"/>
    <property type="match status" value="1"/>
</dbReference>
<dbReference type="Pfam" id="PF03444">
    <property type="entry name" value="HrcA_DNA-bdg"/>
    <property type="match status" value="1"/>
</dbReference>
<dbReference type="PIRSF" id="PIRSF005485">
    <property type="entry name" value="HrcA"/>
    <property type="match status" value="1"/>
</dbReference>
<dbReference type="SUPFAM" id="SSF55781">
    <property type="entry name" value="GAF domain-like"/>
    <property type="match status" value="1"/>
</dbReference>
<dbReference type="SUPFAM" id="SSF46785">
    <property type="entry name" value="Winged helix' DNA-binding domain"/>
    <property type="match status" value="1"/>
</dbReference>
<feature type="chain" id="PRO_1000010436" description="Heat-inducible transcription repressor HrcA">
    <location>
        <begin position="1"/>
        <end position="339"/>
    </location>
</feature>
<keyword id="KW-1185">Reference proteome</keyword>
<keyword id="KW-0678">Repressor</keyword>
<keyword id="KW-0346">Stress response</keyword>
<keyword id="KW-0804">Transcription</keyword>
<keyword id="KW-0805">Transcription regulation</keyword>